<comment type="function">
    <text evidence="1">Transfers a GMP moiety from GTP to Mo-molybdopterin (Mo-MPT) cofactor (Moco or molybdenum cofactor) to form Mo-molybdopterin guanine dinucleotide (Mo-MGD) cofactor.</text>
</comment>
<comment type="catalytic activity">
    <reaction evidence="1">
        <text>Mo-molybdopterin + GTP + H(+) = Mo-molybdopterin guanine dinucleotide + diphosphate</text>
        <dbReference type="Rhea" id="RHEA:34243"/>
        <dbReference type="ChEBI" id="CHEBI:15378"/>
        <dbReference type="ChEBI" id="CHEBI:33019"/>
        <dbReference type="ChEBI" id="CHEBI:37565"/>
        <dbReference type="ChEBI" id="CHEBI:71302"/>
        <dbReference type="ChEBI" id="CHEBI:71310"/>
        <dbReference type="EC" id="2.7.7.77"/>
    </reaction>
</comment>
<comment type="cofactor">
    <cofactor evidence="1">
        <name>Mg(2+)</name>
        <dbReference type="ChEBI" id="CHEBI:18420"/>
    </cofactor>
</comment>
<comment type="subunit">
    <text evidence="1">Monomer.</text>
</comment>
<comment type="subcellular location">
    <subcellularLocation>
        <location evidence="1">Cytoplasm</location>
    </subcellularLocation>
</comment>
<comment type="domain">
    <text evidence="1">The N-terminal domain determines nucleotide recognition and specific binding, while the C-terminal domain determines the specific binding to the target protein.</text>
</comment>
<comment type="similarity">
    <text evidence="1">Belongs to the MobA family.</text>
</comment>
<evidence type="ECO:0000255" key="1">
    <source>
        <dbReference type="HAMAP-Rule" id="MF_00316"/>
    </source>
</evidence>
<proteinExistence type="inferred from homology"/>
<feature type="chain" id="PRO_1000115812" description="Molybdenum cofactor guanylyltransferase">
    <location>
        <begin position="1"/>
        <end position="195"/>
    </location>
</feature>
<feature type="binding site" evidence="1">
    <location>
        <begin position="10"/>
        <end position="12"/>
    </location>
    <ligand>
        <name>GTP</name>
        <dbReference type="ChEBI" id="CHEBI:37565"/>
    </ligand>
</feature>
<feature type="binding site" evidence="1">
    <location>
        <position position="23"/>
    </location>
    <ligand>
        <name>GTP</name>
        <dbReference type="ChEBI" id="CHEBI:37565"/>
    </ligand>
</feature>
<feature type="binding site" evidence="1">
    <location>
        <position position="51"/>
    </location>
    <ligand>
        <name>GTP</name>
        <dbReference type="ChEBI" id="CHEBI:37565"/>
    </ligand>
</feature>
<feature type="binding site" evidence="1">
    <location>
        <position position="69"/>
    </location>
    <ligand>
        <name>GTP</name>
        <dbReference type="ChEBI" id="CHEBI:37565"/>
    </ligand>
</feature>
<feature type="binding site" evidence="1">
    <location>
        <position position="99"/>
    </location>
    <ligand>
        <name>GTP</name>
        <dbReference type="ChEBI" id="CHEBI:37565"/>
    </ligand>
</feature>
<feature type="binding site" evidence="1">
    <location>
        <position position="99"/>
    </location>
    <ligand>
        <name>Mg(2+)</name>
        <dbReference type="ChEBI" id="CHEBI:18420"/>
    </ligand>
</feature>
<name>MOBA_YERPG</name>
<reference key="1">
    <citation type="journal article" date="2010" name="J. Bacteriol.">
        <title>Genome sequence of the deep-rooted Yersinia pestis strain Angola reveals new insights into the evolution and pangenome of the plague bacterium.</title>
        <authorList>
            <person name="Eppinger M."/>
            <person name="Worsham P.L."/>
            <person name="Nikolich M.P."/>
            <person name="Riley D.R."/>
            <person name="Sebastian Y."/>
            <person name="Mou S."/>
            <person name="Achtman M."/>
            <person name="Lindler L.E."/>
            <person name="Ravel J."/>
        </authorList>
    </citation>
    <scope>NUCLEOTIDE SEQUENCE [LARGE SCALE GENOMIC DNA]</scope>
    <source>
        <strain>Angola</strain>
    </source>
</reference>
<organism>
    <name type="scientific">Yersinia pestis bv. Antiqua (strain Angola)</name>
    <dbReference type="NCBI Taxonomy" id="349746"/>
    <lineage>
        <taxon>Bacteria</taxon>
        <taxon>Pseudomonadati</taxon>
        <taxon>Pseudomonadota</taxon>
        <taxon>Gammaproteobacteria</taxon>
        <taxon>Enterobacterales</taxon>
        <taxon>Yersiniaceae</taxon>
        <taxon>Yersinia</taxon>
    </lineage>
</organism>
<dbReference type="EC" id="2.7.7.77" evidence="1"/>
<dbReference type="EMBL" id="CP000901">
    <property type="protein sequence ID" value="ABX86890.1"/>
    <property type="molecule type" value="Genomic_DNA"/>
</dbReference>
<dbReference type="RefSeq" id="WP_002213171.1">
    <property type="nucleotide sequence ID" value="NZ_CP009935.1"/>
</dbReference>
<dbReference type="SMR" id="A9QYH5"/>
<dbReference type="GeneID" id="57974576"/>
<dbReference type="KEGG" id="ypg:YpAngola_A0019"/>
<dbReference type="PATRIC" id="fig|349746.12.peg.963"/>
<dbReference type="GO" id="GO:0005737">
    <property type="term" value="C:cytoplasm"/>
    <property type="evidence" value="ECO:0007669"/>
    <property type="project" value="UniProtKB-SubCell"/>
</dbReference>
<dbReference type="GO" id="GO:0005525">
    <property type="term" value="F:GTP binding"/>
    <property type="evidence" value="ECO:0007669"/>
    <property type="project" value="UniProtKB-UniRule"/>
</dbReference>
<dbReference type="GO" id="GO:0046872">
    <property type="term" value="F:metal ion binding"/>
    <property type="evidence" value="ECO:0007669"/>
    <property type="project" value="UniProtKB-KW"/>
</dbReference>
<dbReference type="GO" id="GO:0061603">
    <property type="term" value="F:molybdenum cofactor guanylyltransferase activity"/>
    <property type="evidence" value="ECO:0007669"/>
    <property type="project" value="UniProtKB-EC"/>
</dbReference>
<dbReference type="GO" id="GO:1902758">
    <property type="term" value="P:bis(molybdopterin guanine dinucleotide)molybdenum biosynthetic process"/>
    <property type="evidence" value="ECO:0007669"/>
    <property type="project" value="TreeGrafter"/>
</dbReference>
<dbReference type="CDD" id="cd02503">
    <property type="entry name" value="MobA"/>
    <property type="match status" value="1"/>
</dbReference>
<dbReference type="Gene3D" id="3.90.550.10">
    <property type="entry name" value="Spore Coat Polysaccharide Biosynthesis Protein SpsA, Chain A"/>
    <property type="match status" value="1"/>
</dbReference>
<dbReference type="HAMAP" id="MF_00316">
    <property type="entry name" value="MobA"/>
    <property type="match status" value="1"/>
</dbReference>
<dbReference type="InterPro" id="IPR025877">
    <property type="entry name" value="MobA-like_NTP_Trfase"/>
</dbReference>
<dbReference type="InterPro" id="IPR013482">
    <property type="entry name" value="Molybde_CF_guanTrfase"/>
</dbReference>
<dbReference type="InterPro" id="IPR029044">
    <property type="entry name" value="Nucleotide-diphossugar_trans"/>
</dbReference>
<dbReference type="NCBIfam" id="TIGR02665">
    <property type="entry name" value="molyb_mobA"/>
    <property type="match status" value="1"/>
</dbReference>
<dbReference type="PANTHER" id="PTHR19136">
    <property type="entry name" value="MOLYBDENUM COFACTOR GUANYLYLTRANSFERASE"/>
    <property type="match status" value="1"/>
</dbReference>
<dbReference type="PANTHER" id="PTHR19136:SF81">
    <property type="entry name" value="MOLYBDENUM COFACTOR GUANYLYLTRANSFERASE"/>
    <property type="match status" value="1"/>
</dbReference>
<dbReference type="Pfam" id="PF12804">
    <property type="entry name" value="NTP_transf_3"/>
    <property type="match status" value="1"/>
</dbReference>
<dbReference type="SUPFAM" id="SSF53448">
    <property type="entry name" value="Nucleotide-diphospho-sugar transferases"/>
    <property type="match status" value="1"/>
</dbReference>
<gene>
    <name evidence="1" type="primary">mobA</name>
    <name type="ordered locus">YpAngola_A0019</name>
</gene>
<accession>A9QYH5</accession>
<sequence length="195" mass="21445">MQPNITGVILAGGRSSRMGGNDKGLIPLNGKPLFQYVIDRFKPQVSDLVINANRNQGLYKESGIPVIDDIITGFVGPLAGMHAGLSYASTEWVVFAPCDVPALPSDLVSQLWQGKKQALAAYANDDERAHPTFALMHISLKTQLADYLIRGDRKLMLFLDSINAQRVKFSGKADLFSNLNTPADCDLWEQKRRGQ</sequence>
<keyword id="KW-0963">Cytoplasm</keyword>
<keyword id="KW-0342">GTP-binding</keyword>
<keyword id="KW-0460">Magnesium</keyword>
<keyword id="KW-0479">Metal-binding</keyword>
<keyword id="KW-0501">Molybdenum cofactor biosynthesis</keyword>
<keyword id="KW-0547">Nucleotide-binding</keyword>
<keyword id="KW-0808">Transferase</keyword>
<protein>
    <recommendedName>
        <fullName evidence="1">Molybdenum cofactor guanylyltransferase</fullName>
        <shortName evidence="1">MoCo guanylyltransferase</shortName>
        <ecNumber evidence="1">2.7.7.77</ecNumber>
    </recommendedName>
    <alternativeName>
        <fullName evidence="1">GTP:molybdopterin guanylyltransferase</fullName>
    </alternativeName>
    <alternativeName>
        <fullName evidence="1">Mo-MPT guanylyltransferase</fullName>
    </alternativeName>
    <alternativeName>
        <fullName evidence="1">Molybdopterin guanylyltransferase</fullName>
    </alternativeName>
    <alternativeName>
        <fullName evidence="1">Molybdopterin-guanine dinucleotide synthase</fullName>
        <shortName evidence="1">MGD synthase</shortName>
    </alternativeName>
</protein>